<feature type="chain" id="PRO_0000135781" description="Histidinol dehydrogenase">
    <location>
        <begin position="1"/>
        <end position="442"/>
    </location>
</feature>
<feature type="active site" description="Proton acceptor" evidence="1">
    <location>
        <position position="332"/>
    </location>
</feature>
<feature type="active site" description="Proton acceptor" evidence="1">
    <location>
        <position position="333"/>
    </location>
</feature>
<feature type="binding site" evidence="1">
    <location>
        <position position="132"/>
    </location>
    <ligand>
        <name>NAD(+)</name>
        <dbReference type="ChEBI" id="CHEBI:57540"/>
    </ligand>
</feature>
<feature type="binding site" evidence="1">
    <location>
        <position position="194"/>
    </location>
    <ligand>
        <name>NAD(+)</name>
        <dbReference type="ChEBI" id="CHEBI:57540"/>
    </ligand>
</feature>
<feature type="binding site" evidence="1">
    <location>
        <position position="217"/>
    </location>
    <ligand>
        <name>NAD(+)</name>
        <dbReference type="ChEBI" id="CHEBI:57540"/>
    </ligand>
</feature>
<feature type="binding site" evidence="1">
    <location>
        <position position="243"/>
    </location>
    <ligand>
        <name>substrate</name>
    </ligand>
</feature>
<feature type="binding site" evidence="1">
    <location>
        <position position="265"/>
    </location>
    <ligand>
        <name>substrate</name>
    </ligand>
</feature>
<feature type="binding site" evidence="1">
    <location>
        <position position="265"/>
    </location>
    <ligand>
        <name>Zn(2+)</name>
        <dbReference type="ChEBI" id="CHEBI:29105"/>
    </ligand>
</feature>
<feature type="binding site" evidence="1">
    <location>
        <position position="268"/>
    </location>
    <ligand>
        <name>substrate</name>
    </ligand>
</feature>
<feature type="binding site" evidence="1">
    <location>
        <position position="268"/>
    </location>
    <ligand>
        <name>Zn(2+)</name>
        <dbReference type="ChEBI" id="CHEBI:29105"/>
    </ligand>
</feature>
<feature type="binding site" evidence="1">
    <location>
        <position position="333"/>
    </location>
    <ligand>
        <name>substrate</name>
    </ligand>
</feature>
<feature type="binding site" evidence="1">
    <location>
        <position position="366"/>
    </location>
    <ligand>
        <name>substrate</name>
    </ligand>
</feature>
<feature type="binding site" evidence="1">
    <location>
        <position position="366"/>
    </location>
    <ligand>
        <name>Zn(2+)</name>
        <dbReference type="ChEBI" id="CHEBI:29105"/>
    </ligand>
</feature>
<feature type="binding site" evidence="1">
    <location>
        <position position="420"/>
    </location>
    <ligand>
        <name>substrate</name>
    </ligand>
</feature>
<feature type="binding site" evidence="1">
    <location>
        <position position="425"/>
    </location>
    <ligand>
        <name>substrate</name>
    </ligand>
</feature>
<feature type="binding site" evidence="1">
    <location>
        <position position="425"/>
    </location>
    <ligand>
        <name>Zn(2+)</name>
        <dbReference type="ChEBI" id="CHEBI:29105"/>
    </ligand>
</feature>
<keyword id="KW-0028">Amino-acid biosynthesis</keyword>
<keyword id="KW-0368">Histidine biosynthesis</keyword>
<keyword id="KW-0479">Metal-binding</keyword>
<keyword id="KW-0520">NAD</keyword>
<keyword id="KW-0560">Oxidoreductase</keyword>
<keyword id="KW-1185">Reference proteome</keyword>
<keyword id="KW-0862">Zinc</keyword>
<name>HISX_IDILO</name>
<evidence type="ECO:0000255" key="1">
    <source>
        <dbReference type="HAMAP-Rule" id="MF_01024"/>
    </source>
</evidence>
<gene>
    <name evidence="1" type="primary">hisD</name>
    <name type="ordered locus">IL1835</name>
</gene>
<organism>
    <name type="scientific">Idiomarina loihiensis (strain ATCC BAA-735 / DSM 15497 / L2-TR)</name>
    <dbReference type="NCBI Taxonomy" id="283942"/>
    <lineage>
        <taxon>Bacteria</taxon>
        <taxon>Pseudomonadati</taxon>
        <taxon>Pseudomonadota</taxon>
        <taxon>Gammaproteobacteria</taxon>
        <taxon>Alteromonadales</taxon>
        <taxon>Idiomarinaceae</taxon>
        <taxon>Idiomarina</taxon>
    </lineage>
</organism>
<dbReference type="EC" id="1.1.1.23" evidence="1"/>
<dbReference type="EMBL" id="AE017340">
    <property type="protein sequence ID" value="AAV82667.1"/>
    <property type="molecule type" value="Genomic_DNA"/>
</dbReference>
<dbReference type="RefSeq" id="WP_011235067.1">
    <property type="nucleotide sequence ID" value="NC_006512.1"/>
</dbReference>
<dbReference type="SMR" id="Q5QWP8"/>
<dbReference type="STRING" id="283942.IL1835"/>
<dbReference type="GeneID" id="41337019"/>
<dbReference type="KEGG" id="ilo:IL1835"/>
<dbReference type="eggNOG" id="COG0141">
    <property type="taxonomic scope" value="Bacteria"/>
</dbReference>
<dbReference type="HOGENOM" id="CLU_006732_3_0_6"/>
<dbReference type="OrthoDB" id="9805269at2"/>
<dbReference type="UniPathway" id="UPA00031">
    <property type="reaction ID" value="UER00014"/>
</dbReference>
<dbReference type="Proteomes" id="UP000001171">
    <property type="component" value="Chromosome"/>
</dbReference>
<dbReference type="GO" id="GO:0005829">
    <property type="term" value="C:cytosol"/>
    <property type="evidence" value="ECO:0007669"/>
    <property type="project" value="TreeGrafter"/>
</dbReference>
<dbReference type="GO" id="GO:0004399">
    <property type="term" value="F:histidinol dehydrogenase activity"/>
    <property type="evidence" value="ECO:0007669"/>
    <property type="project" value="UniProtKB-UniRule"/>
</dbReference>
<dbReference type="GO" id="GO:0051287">
    <property type="term" value="F:NAD binding"/>
    <property type="evidence" value="ECO:0007669"/>
    <property type="project" value="InterPro"/>
</dbReference>
<dbReference type="GO" id="GO:0008270">
    <property type="term" value="F:zinc ion binding"/>
    <property type="evidence" value="ECO:0007669"/>
    <property type="project" value="UniProtKB-UniRule"/>
</dbReference>
<dbReference type="GO" id="GO:0000105">
    <property type="term" value="P:L-histidine biosynthetic process"/>
    <property type="evidence" value="ECO:0007669"/>
    <property type="project" value="UniProtKB-UniRule"/>
</dbReference>
<dbReference type="CDD" id="cd06572">
    <property type="entry name" value="Histidinol_dh"/>
    <property type="match status" value="1"/>
</dbReference>
<dbReference type="FunFam" id="1.20.5.1300:FF:000001">
    <property type="entry name" value="Histidine biosynthesis trifunctional protein"/>
    <property type="match status" value="1"/>
</dbReference>
<dbReference type="FunFam" id="3.40.50.1980:FF:000001">
    <property type="entry name" value="Histidinol dehydrogenase"/>
    <property type="match status" value="1"/>
</dbReference>
<dbReference type="FunFam" id="3.40.50.1980:FF:000002">
    <property type="entry name" value="Histidinol dehydrogenase, chloroplastic"/>
    <property type="match status" value="1"/>
</dbReference>
<dbReference type="Gene3D" id="1.20.5.1300">
    <property type="match status" value="1"/>
</dbReference>
<dbReference type="Gene3D" id="3.40.50.1980">
    <property type="entry name" value="Nitrogenase molybdenum iron protein domain"/>
    <property type="match status" value="2"/>
</dbReference>
<dbReference type="HAMAP" id="MF_01024">
    <property type="entry name" value="HisD"/>
    <property type="match status" value="1"/>
</dbReference>
<dbReference type="InterPro" id="IPR016161">
    <property type="entry name" value="Ald_DH/histidinol_DH"/>
</dbReference>
<dbReference type="InterPro" id="IPR001692">
    <property type="entry name" value="Histidinol_DH_CS"/>
</dbReference>
<dbReference type="InterPro" id="IPR022695">
    <property type="entry name" value="Histidinol_DH_monofunct"/>
</dbReference>
<dbReference type="InterPro" id="IPR012131">
    <property type="entry name" value="Hstdl_DH"/>
</dbReference>
<dbReference type="NCBIfam" id="TIGR00069">
    <property type="entry name" value="hisD"/>
    <property type="match status" value="1"/>
</dbReference>
<dbReference type="PANTHER" id="PTHR21256:SF2">
    <property type="entry name" value="HISTIDINE BIOSYNTHESIS TRIFUNCTIONAL PROTEIN"/>
    <property type="match status" value="1"/>
</dbReference>
<dbReference type="PANTHER" id="PTHR21256">
    <property type="entry name" value="HISTIDINOL DEHYDROGENASE HDH"/>
    <property type="match status" value="1"/>
</dbReference>
<dbReference type="Pfam" id="PF00815">
    <property type="entry name" value="Histidinol_dh"/>
    <property type="match status" value="1"/>
</dbReference>
<dbReference type="PIRSF" id="PIRSF000099">
    <property type="entry name" value="Histidinol_dh"/>
    <property type="match status" value="1"/>
</dbReference>
<dbReference type="PRINTS" id="PR00083">
    <property type="entry name" value="HOLDHDRGNASE"/>
</dbReference>
<dbReference type="SUPFAM" id="SSF53720">
    <property type="entry name" value="ALDH-like"/>
    <property type="match status" value="1"/>
</dbReference>
<dbReference type="PROSITE" id="PS00611">
    <property type="entry name" value="HISOL_DEHYDROGENASE"/>
    <property type="match status" value="1"/>
</dbReference>
<proteinExistence type="inferred from homology"/>
<sequence length="442" mass="47447">MSELRIPIEQWQSLSSAEQTQRLARPGRAQAESLREKVAVILSDVRDNGERAVLNYTRQFDNPDATSLRMSDEQVEAAVASLDDKVKRAIDTAYQTIYRFHEAQRPQDLSIETAPGVQCELRYAPLDAVGLYIPGGSATLPSTALMLGVPAQIAGCQRVVMVSPPNKQGELPAALLYAAKRCGVTDILLCGGAQAIGALAYGIESSPAVGKVFGPGNSFVTEAKQQVSQNDSGCAMDLPAGPSELLVIADDSANPAYVAADLLSQAEHGPDSQVILLTPSMTVAENVRQELMAQCAQLSRADIAEQALQASRLLVVADMNEAIAISETYAPEHLSIQTDNARDLLPQLTRAGSVFVGHYTPESGGDYATGTNHVLPTYGYARNYSSLGLVDFYRRYTVQEASHDGLRQLAEAITTLADVEGLDAHKRAVTIRTETKSTESKL</sequence>
<reference key="1">
    <citation type="journal article" date="2004" name="Proc. Natl. Acad. Sci. U.S.A.">
        <title>Genome sequence of the deep-sea gamma-proteobacterium Idiomarina loihiensis reveals amino acid fermentation as a source of carbon and energy.</title>
        <authorList>
            <person name="Hou S."/>
            <person name="Saw J.H."/>
            <person name="Lee K.S."/>
            <person name="Freitas T.A."/>
            <person name="Belisle C."/>
            <person name="Kawarabayasi Y."/>
            <person name="Donachie S.P."/>
            <person name="Pikina A."/>
            <person name="Galperin M.Y."/>
            <person name="Koonin E.V."/>
            <person name="Makarova K.S."/>
            <person name="Omelchenko M.V."/>
            <person name="Sorokin A."/>
            <person name="Wolf Y.I."/>
            <person name="Li Q.X."/>
            <person name="Keum Y.S."/>
            <person name="Campbell S."/>
            <person name="Denery J."/>
            <person name="Aizawa S."/>
            <person name="Shibata S."/>
            <person name="Malahoff A."/>
            <person name="Alam M."/>
        </authorList>
    </citation>
    <scope>NUCLEOTIDE SEQUENCE [LARGE SCALE GENOMIC DNA]</scope>
    <source>
        <strain>ATCC BAA-735 / DSM 15497 / L2-TR</strain>
    </source>
</reference>
<accession>Q5QWP8</accession>
<protein>
    <recommendedName>
        <fullName evidence="1">Histidinol dehydrogenase</fullName>
        <shortName evidence="1">HDH</shortName>
        <ecNumber evidence="1">1.1.1.23</ecNumber>
    </recommendedName>
</protein>
<comment type="function">
    <text evidence="1">Catalyzes the sequential NAD-dependent oxidations of L-histidinol to L-histidinaldehyde and then to L-histidine.</text>
</comment>
<comment type="catalytic activity">
    <reaction evidence="1">
        <text>L-histidinol + 2 NAD(+) + H2O = L-histidine + 2 NADH + 3 H(+)</text>
        <dbReference type="Rhea" id="RHEA:20641"/>
        <dbReference type="ChEBI" id="CHEBI:15377"/>
        <dbReference type="ChEBI" id="CHEBI:15378"/>
        <dbReference type="ChEBI" id="CHEBI:57540"/>
        <dbReference type="ChEBI" id="CHEBI:57595"/>
        <dbReference type="ChEBI" id="CHEBI:57699"/>
        <dbReference type="ChEBI" id="CHEBI:57945"/>
        <dbReference type="EC" id="1.1.1.23"/>
    </reaction>
</comment>
<comment type="cofactor">
    <cofactor evidence="1">
        <name>Zn(2+)</name>
        <dbReference type="ChEBI" id="CHEBI:29105"/>
    </cofactor>
    <text evidence="1">Binds 1 zinc ion per subunit.</text>
</comment>
<comment type="pathway">
    <text evidence="1">Amino-acid biosynthesis; L-histidine biosynthesis; L-histidine from 5-phospho-alpha-D-ribose 1-diphosphate: step 9/9.</text>
</comment>
<comment type="similarity">
    <text evidence="1">Belongs to the histidinol dehydrogenase family.</text>
</comment>